<sequence>MSTHDPISDLITRIRNAQMRNKSKVSTPGSRMRANVLEVLKSEGYIRGYASVEHSSGRSELEIELKYFDGEPVIREIERISRPGRRVYASVKNLPRVKNGLGISVLSTPKGIMADHEARDANVGGEVLFTVF</sequence>
<feature type="chain" id="PRO_0000290888" description="Small ribosomal subunit protein uS8">
    <location>
        <begin position="1"/>
        <end position="132"/>
    </location>
</feature>
<proteinExistence type="inferred from homology"/>
<protein>
    <recommendedName>
        <fullName evidence="1">Small ribosomal subunit protein uS8</fullName>
    </recommendedName>
    <alternativeName>
        <fullName evidence="2">30S ribosomal protein S8</fullName>
    </alternativeName>
</protein>
<dbReference type="EMBL" id="CP000319">
    <property type="protein sequence ID" value="ABE62381.1"/>
    <property type="molecule type" value="Genomic_DNA"/>
</dbReference>
<dbReference type="RefSeq" id="WP_011510067.1">
    <property type="nucleotide sequence ID" value="NC_007964.1"/>
</dbReference>
<dbReference type="SMR" id="Q1QN16"/>
<dbReference type="STRING" id="323097.Nham_1559"/>
<dbReference type="KEGG" id="nha:Nham_1559"/>
<dbReference type="eggNOG" id="COG0096">
    <property type="taxonomic scope" value="Bacteria"/>
</dbReference>
<dbReference type="HOGENOM" id="CLU_098428_0_0_5"/>
<dbReference type="OrthoDB" id="9802617at2"/>
<dbReference type="Proteomes" id="UP000001953">
    <property type="component" value="Chromosome"/>
</dbReference>
<dbReference type="GO" id="GO:1990904">
    <property type="term" value="C:ribonucleoprotein complex"/>
    <property type="evidence" value="ECO:0007669"/>
    <property type="project" value="UniProtKB-KW"/>
</dbReference>
<dbReference type="GO" id="GO:0005840">
    <property type="term" value="C:ribosome"/>
    <property type="evidence" value="ECO:0007669"/>
    <property type="project" value="UniProtKB-KW"/>
</dbReference>
<dbReference type="GO" id="GO:0019843">
    <property type="term" value="F:rRNA binding"/>
    <property type="evidence" value="ECO:0007669"/>
    <property type="project" value="UniProtKB-UniRule"/>
</dbReference>
<dbReference type="GO" id="GO:0003735">
    <property type="term" value="F:structural constituent of ribosome"/>
    <property type="evidence" value="ECO:0007669"/>
    <property type="project" value="InterPro"/>
</dbReference>
<dbReference type="GO" id="GO:0006412">
    <property type="term" value="P:translation"/>
    <property type="evidence" value="ECO:0007669"/>
    <property type="project" value="UniProtKB-UniRule"/>
</dbReference>
<dbReference type="FunFam" id="3.30.1370.30:FF:000002">
    <property type="entry name" value="30S ribosomal protein S8"/>
    <property type="match status" value="1"/>
</dbReference>
<dbReference type="FunFam" id="3.30.1490.10:FF:000001">
    <property type="entry name" value="30S ribosomal protein S8"/>
    <property type="match status" value="1"/>
</dbReference>
<dbReference type="Gene3D" id="3.30.1370.30">
    <property type="match status" value="1"/>
</dbReference>
<dbReference type="Gene3D" id="3.30.1490.10">
    <property type="match status" value="1"/>
</dbReference>
<dbReference type="HAMAP" id="MF_01302_B">
    <property type="entry name" value="Ribosomal_uS8_B"/>
    <property type="match status" value="1"/>
</dbReference>
<dbReference type="InterPro" id="IPR000630">
    <property type="entry name" value="Ribosomal_uS8"/>
</dbReference>
<dbReference type="InterPro" id="IPR047863">
    <property type="entry name" value="Ribosomal_uS8_CS"/>
</dbReference>
<dbReference type="InterPro" id="IPR035987">
    <property type="entry name" value="Ribosomal_uS8_sf"/>
</dbReference>
<dbReference type="NCBIfam" id="NF001109">
    <property type="entry name" value="PRK00136.1"/>
    <property type="match status" value="1"/>
</dbReference>
<dbReference type="PANTHER" id="PTHR11758">
    <property type="entry name" value="40S RIBOSOMAL PROTEIN S15A"/>
    <property type="match status" value="1"/>
</dbReference>
<dbReference type="Pfam" id="PF00410">
    <property type="entry name" value="Ribosomal_S8"/>
    <property type="match status" value="1"/>
</dbReference>
<dbReference type="SUPFAM" id="SSF56047">
    <property type="entry name" value="Ribosomal protein S8"/>
    <property type="match status" value="1"/>
</dbReference>
<dbReference type="PROSITE" id="PS00053">
    <property type="entry name" value="RIBOSOMAL_S8"/>
    <property type="match status" value="1"/>
</dbReference>
<reference key="1">
    <citation type="submission" date="2006-03" db="EMBL/GenBank/DDBJ databases">
        <title>Complete sequence of chromosome of Nitrobacter hamburgensis X14.</title>
        <authorList>
            <consortium name="US DOE Joint Genome Institute"/>
            <person name="Copeland A."/>
            <person name="Lucas S."/>
            <person name="Lapidus A."/>
            <person name="Barry K."/>
            <person name="Detter J.C."/>
            <person name="Glavina del Rio T."/>
            <person name="Hammon N."/>
            <person name="Israni S."/>
            <person name="Dalin E."/>
            <person name="Tice H."/>
            <person name="Pitluck S."/>
            <person name="Chain P."/>
            <person name="Malfatti S."/>
            <person name="Shin M."/>
            <person name="Vergez L."/>
            <person name="Schmutz J."/>
            <person name="Larimer F."/>
            <person name="Land M."/>
            <person name="Hauser L."/>
            <person name="Kyrpides N."/>
            <person name="Ivanova N."/>
            <person name="Ward B."/>
            <person name="Arp D."/>
            <person name="Klotz M."/>
            <person name="Stein L."/>
            <person name="O'Mullan G."/>
            <person name="Starkenburg S."/>
            <person name="Sayavedra L."/>
            <person name="Poret-Peterson A.T."/>
            <person name="Gentry M.E."/>
            <person name="Bruce D."/>
            <person name="Richardson P."/>
        </authorList>
    </citation>
    <scope>NUCLEOTIDE SEQUENCE [LARGE SCALE GENOMIC DNA]</scope>
    <source>
        <strain>DSM 10229 / NCIMB 13809 / X14</strain>
    </source>
</reference>
<evidence type="ECO:0000255" key="1">
    <source>
        <dbReference type="HAMAP-Rule" id="MF_01302"/>
    </source>
</evidence>
<evidence type="ECO:0000305" key="2"/>
<comment type="function">
    <text evidence="1">One of the primary rRNA binding proteins, it binds directly to 16S rRNA central domain where it helps coordinate assembly of the platform of the 30S subunit.</text>
</comment>
<comment type="subunit">
    <text evidence="1">Part of the 30S ribosomal subunit. Contacts proteins S5 and S12.</text>
</comment>
<comment type="similarity">
    <text evidence="1">Belongs to the universal ribosomal protein uS8 family.</text>
</comment>
<gene>
    <name evidence="1" type="primary">rpsH</name>
    <name type="ordered locus">Nham_1559</name>
</gene>
<keyword id="KW-1185">Reference proteome</keyword>
<keyword id="KW-0687">Ribonucleoprotein</keyword>
<keyword id="KW-0689">Ribosomal protein</keyword>
<keyword id="KW-0694">RNA-binding</keyword>
<keyword id="KW-0699">rRNA-binding</keyword>
<organism>
    <name type="scientific">Nitrobacter hamburgensis (strain DSM 10229 / NCIMB 13809 / X14)</name>
    <dbReference type="NCBI Taxonomy" id="323097"/>
    <lineage>
        <taxon>Bacteria</taxon>
        <taxon>Pseudomonadati</taxon>
        <taxon>Pseudomonadota</taxon>
        <taxon>Alphaproteobacteria</taxon>
        <taxon>Hyphomicrobiales</taxon>
        <taxon>Nitrobacteraceae</taxon>
        <taxon>Nitrobacter</taxon>
    </lineage>
</organism>
<accession>Q1QN16</accession>
<name>RS8_NITHX</name>